<accession>A5CSZ4</accession>
<evidence type="ECO:0000250" key="1"/>
<evidence type="ECO:0000255" key="2">
    <source>
        <dbReference type="HAMAP-Rule" id="MF_00100"/>
    </source>
</evidence>
<evidence type="ECO:0000256" key="3">
    <source>
        <dbReference type="SAM" id="MobiDB-lite"/>
    </source>
</evidence>
<dbReference type="EMBL" id="AM711867">
    <property type="protein sequence ID" value="CAN02219.1"/>
    <property type="molecule type" value="Genomic_DNA"/>
</dbReference>
<dbReference type="RefSeq" id="WP_012038839.1">
    <property type="nucleotide sequence ID" value="NC_009480.1"/>
</dbReference>
<dbReference type="SMR" id="A5CSZ4"/>
<dbReference type="KEGG" id="cmi:CMM_2149"/>
<dbReference type="eggNOG" id="COG0532">
    <property type="taxonomic scope" value="Bacteria"/>
</dbReference>
<dbReference type="eggNOG" id="COG3266">
    <property type="taxonomic scope" value="Bacteria"/>
</dbReference>
<dbReference type="HOGENOM" id="CLU_006301_9_1_11"/>
<dbReference type="OrthoDB" id="9811804at2"/>
<dbReference type="Proteomes" id="UP000001564">
    <property type="component" value="Chromosome"/>
</dbReference>
<dbReference type="GO" id="GO:0005829">
    <property type="term" value="C:cytosol"/>
    <property type="evidence" value="ECO:0007669"/>
    <property type="project" value="TreeGrafter"/>
</dbReference>
<dbReference type="GO" id="GO:0005525">
    <property type="term" value="F:GTP binding"/>
    <property type="evidence" value="ECO:0007669"/>
    <property type="project" value="UniProtKB-KW"/>
</dbReference>
<dbReference type="GO" id="GO:0003924">
    <property type="term" value="F:GTPase activity"/>
    <property type="evidence" value="ECO:0007669"/>
    <property type="project" value="UniProtKB-UniRule"/>
</dbReference>
<dbReference type="GO" id="GO:0003743">
    <property type="term" value="F:translation initiation factor activity"/>
    <property type="evidence" value="ECO:0007669"/>
    <property type="project" value="UniProtKB-UniRule"/>
</dbReference>
<dbReference type="CDD" id="cd01887">
    <property type="entry name" value="IF2_eIF5B"/>
    <property type="match status" value="1"/>
</dbReference>
<dbReference type="CDD" id="cd03702">
    <property type="entry name" value="IF2_mtIF2_II"/>
    <property type="match status" value="1"/>
</dbReference>
<dbReference type="CDD" id="cd03692">
    <property type="entry name" value="mtIF2_IVc"/>
    <property type="match status" value="1"/>
</dbReference>
<dbReference type="FunFam" id="2.40.30.10:FF:000007">
    <property type="entry name" value="Translation initiation factor IF-2"/>
    <property type="match status" value="1"/>
</dbReference>
<dbReference type="FunFam" id="2.40.30.10:FF:000008">
    <property type="entry name" value="Translation initiation factor IF-2"/>
    <property type="match status" value="1"/>
</dbReference>
<dbReference type="FunFam" id="3.40.50.10050:FF:000001">
    <property type="entry name" value="Translation initiation factor IF-2"/>
    <property type="match status" value="1"/>
</dbReference>
<dbReference type="FunFam" id="3.40.50.300:FF:000019">
    <property type="entry name" value="Translation initiation factor IF-2"/>
    <property type="match status" value="1"/>
</dbReference>
<dbReference type="Gene3D" id="1.10.10.2480">
    <property type="match status" value="1"/>
</dbReference>
<dbReference type="Gene3D" id="3.40.50.300">
    <property type="entry name" value="P-loop containing nucleotide triphosphate hydrolases"/>
    <property type="match status" value="1"/>
</dbReference>
<dbReference type="Gene3D" id="2.40.30.10">
    <property type="entry name" value="Translation factors"/>
    <property type="match status" value="2"/>
</dbReference>
<dbReference type="Gene3D" id="3.40.50.10050">
    <property type="entry name" value="Translation initiation factor IF- 2, domain 3"/>
    <property type="match status" value="1"/>
</dbReference>
<dbReference type="HAMAP" id="MF_00100_B">
    <property type="entry name" value="IF_2_B"/>
    <property type="match status" value="1"/>
</dbReference>
<dbReference type="InterPro" id="IPR053905">
    <property type="entry name" value="EF-G-like_DII"/>
</dbReference>
<dbReference type="InterPro" id="IPR044145">
    <property type="entry name" value="IF2_II"/>
</dbReference>
<dbReference type="InterPro" id="IPR006847">
    <property type="entry name" value="IF2_N"/>
</dbReference>
<dbReference type="InterPro" id="IPR027417">
    <property type="entry name" value="P-loop_NTPase"/>
</dbReference>
<dbReference type="InterPro" id="IPR005225">
    <property type="entry name" value="Small_GTP-bd"/>
</dbReference>
<dbReference type="InterPro" id="IPR000795">
    <property type="entry name" value="T_Tr_GTP-bd_dom"/>
</dbReference>
<dbReference type="InterPro" id="IPR000178">
    <property type="entry name" value="TF_IF2_bacterial-like"/>
</dbReference>
<dbReference type="InterPro" id="IPR015760">
    <property type="entry name" value="TIF_IF2"/>
</dbReference>
<dbReference type="InterPro" id="IPR023115">
    <property type="entry name" value="TIF_IF2_dom3"/>
</dbReference>
<dbReference type="InterPro" id="IPR036925">
    <property type="entry name" value="TIF_IF2_dom3_sf"/>
</dbReference>
<dbReference type="InterPro" id="IPR009000">
    <property type="entry name" value="Transl_B-barrel_sf"/>
</dbReference>
<dbReference type="NCBIfam" id="TIGR00487">
    <property type="entry name" value="IF-2"/>
    <property type="match status" value="1"/>
</dbReference>
<dbReference type="NCBIfam" id="TIGR00231">
    <property type="entry name" value="small_GTP"/>
    <property type="match status" value="1"/>
</dbReference>
<dbReference type="PANTHER" id="PTHR43381:SF5">
    <property type="entry name" value="TR-TYPE G DOMAIN-CONTAINING PROTEIN"/>
    <property type="match status" value="1"/>
</dbReference>
<dbReference type="PANTHER" id="PTHR43381">
    <property type="entry name" value="TRANSLATION INITIATION FACTOR IF-2-RELATED"/>
    <property type="match status" value="1"/>
</dbReference>
<dbReference type="Pfam" id="PF22042">
    <property type="entry name" value="EF-G_D2"/>
    <property type="match status" value="1"/>
</dbReference>
<dbReference type="Pfam" id="PF00009">
    <property type="entry name" value="GTP_EFTU"/>
    <property type="match status" value="1"/>
</dbReference>
<dbReference type="Pfam" id="PF11987">
    <property type="entry name" value="IF-2"/>
    <property type="match status" value="1"/>
</dbReference>
<dbReference type="Pfam" id="PF04760">
    <property type="entry name" value="IF2_N"/>
    <property type="match status" value="2"/>
</dbReference>
<dbReference type="PRINTS" id="PR00315">
    <property type="entry name" value="ELONGATNFCT"/>
</dbReference>
<dbReference type="SUPFAM" id="SSF52156">
    <property type="entry name" value="Initiation factor IF2/eIF5b, domain 3"/>
    <property type="match status" value="1"/>
</dbReference>
<dbReference type="SUPFAM" id="SSF52540">
    <property type="entry name" value="P-loop containing nucleoside triphosphate hydrolases"/>
    <property type="match status" value="1"/>
</dbReference>
<dbReference type="SUPFAM" id="SSF50447">
    <property type="entry name" value="Translation proteins"/>
    <property type="match status" value="2"/>
</dbReference>
<dbReference type="PROSITE" id="PS51722">
    <property type="entry name" value="G_TR_2"/>
    <property type="match status" value="1"/>
</dbReference>
<gene>
    <name evidence="2" type="primary">infB</name>
    <name type="ordered locus">CMM_2149</name>
</gene>
<proteinExistence type="inferred from homology"/>
<protein>
    <recommendedName>
        <fullName evidence="2">Translation initiation factor IF-2</fullName>
    </recommendedName>
</protein>
<name>IF2_CLAM3</name>
<sequence>MAKPRVHEIAAEIGVDSKTALAKLKEMGEFVKGPSSSIEPPVARKLKAALEAAGLTGQAAAPAAAPSSAPRPGARSSAPKPGGRPTPGPQPTAAPEVEAPEASDVPVPAKPLTVAERQAQAEASRKAAAEEKAQAEKSAASATPDAPAAETPSAPRPDAGSAPAPSNGIPRPGIPRPAAPRPGNNPFASNQGMGTKPRPGNNPFASNQGMGQRPAAGAAGPRPAAPRPGSPRPGAPRPGGVGQGARPAGFGQRPAGAGRPGGAPGGAGRPGAPAAGGFQRPAGGFAGRPGGGGRGRGPGGGTAGAFGRGGGKSKSRKSKRTKRAEFELREAPSLGGVSVPRGDGNTIVRLRRGASISDFADKIDASPGNLVTVLFHLGEMATATESLDEATFEVLGTELGYKIQVVSPEDEDRELLEGFDIDLDQELEDEDDDVLEIRPPVVTVMGHVDHGKTRLLDAIRNANVIEGEAGGITQHIGAYQVWAPHEGYERAITFIDTPGHEAFTAMRARGAQVTDIAILVVAADDGIMPQTVEALNHAQAANVPIVVAVNKVDKEGANPAKVRQQLTEYGLVAEEYGGDVMFVDVSALTGKGVEDLLEAVLLTADAGLDLRSNPNKDARGVAIEARLDKGRGAVATVLIQSGTLRVGDAIVAGTAYGRVRAMMDENGDAVHEAYPSRPVQVQGLSSVPGAGDTFLVTEEDRTARQIAEKREAVERNAQLAKARKRISLEDFTRALEEGKVESLNLIIKGDVSGAVEALEESLMKIEVDDSVQLRIIHRGVGAVTESDVNLATIDNAIIIGFNVRPDPKARARAAREGVDIRFYSVIYSALEEIESSLTGMLKPEFEEVQSGVAEIREVFRSSKFGNIAGVIVRSGTITRNAKARVIRDGVVVGDSLAIESLRRFKDDVSEVRTDFEAGIGLGKFNDIQIGDEIETIEMKEKPRV</sequence>
<organism>
    <name type="scientific">Clavibacter michiganensis subsp. michiganensis (strain NCPPB 382)</name>
    <dbReference type="NCBI Taxonomy" id="443906"/>
    <lineage>
        <taxon>Bacteria</taxon>
        <taxon>Bacillati</taxon>
        <taxon>Actinomycetota</taxon>
        <taxon>Actinomycetes</taxon>
        <taxon>Micrococcales</taxon>
        <taxon>Microbacteriaceae</taxon>
        <taxon>Clavibacter</taxon>
    </lineage>
</organism>
<reference key="1">
    <citation type="journal article" date="2008" name="J. Bacteriol.">
        <title>The genome sequence of the tomato-pathogenic actinomycete Clavibacter michiganensis subsp. michiganensis NCPPB382 reveals a large island involved in pathogenicity.</title>
        <authorList>
            <person name="Gartemann K.-H."/>
            <person name="Abt B."/>
            <person name="Bekel T."/>
            <person name="Burger A."/>
            <person name="Engemann J."/>
            <person name="Fluegel M."/>
            <person name="Gaigalat L."/>
            <person name="Goesmann A."/>
            <person name="Graefen I."/>
            <person name="Kalinowski J."/>
            <person name="Kaup O."/>
            <person name="Kirchner O."/>
            <person name="Krause L."/>
            <person name="Linke B."/>
            <person name="McHardy A."/>
            <person name="Meyer F."/>
            <person name="Pohle S."/>
            <person name="Rueckert C."/>
            <person name="Schneiker S."/>
            <person name="Zellermann E.-M."/>
            <person name="Puehler A."/>
            <person name="Eichenlaub R."/>
            <person name="Kaiser O."/>
            <person name="Bartels D."/>
        </authorList>
    </citation>
    <scope>NUCLEOTIDE SEQUENCE [LARGE SCALE GENOMIC DNA]</scope>
    <source>
        <strain>NCPPB 382</strain>
    </source>
</reference>
<comment type="function">
    <text evidence="2">One of the essential components for the initiation of protein synthesis. Protects formylmethionyl-tRNA from spontaneous hydrolysis and promotes its binding to the 30S ribosomal subunits. Also involved in the hydrolysis of GTP during the formation of the 70S ribosomal complex.</text>
</comment>
<comment type="subcellular location">
    <subcellularLocation>
        <location evidence="2">Cytoplasm</location>
    </subcellularLocation>
</comment>
<comment type="similarity">
    <text evidence="2">Belongs to the TRAFAC class translation factor GTPase superfamily. Classic translation factor GTPase family. IF-2 subfamily.</text>
</comment>
<feature type="chain" id="PRO_1000008228" description="Translation initiation factor IF-2">
    <location>
        <begin position="1"/>
        <end position="944"/>
    </location>
</feature>
<feature type="domain" description="tr-type G">
    <location>
        <begin position="437"/>
        <end position="611"/>
    </location>
</feature>
<feature type="region of interest" description="Disordered" evidence="3">
    <location>
        <begin position="55"/>
        <end position="329"/>
    </location>
</feature>
<feature type="region of interest" description="G1" evidence="1">
    <location>
        <begin position="446"/>
        <end position="453"/>
    </location>
</feature>
<feature type="region of interest" description="G2" evidence="1">
    <location>
        <begin position="471"/>
        <end position="475"/>
    </location>
</feature>
<feature type="region of interest" description="G3" evidence="1">
    <location>
        <begin position="496"/>
        <end position="499"/>
    </location>
</feature>
<feature type="region of interest" description="G4" evidence="1">
    <location>
        <begin position="550"/>
        <end position="553"/>
    </location>
</feature>
<feature type="region of interest" description="G5" evidence="1">
    <location>
        <begin position="586"/>
        <end position="588"/>
    </location>
</feature>
<feature type="compositionally biased region" description="Low complexity" evidence="3">
    <location>
        <begin position="55"/>
        <end position="81"/>
    </location>
</feature>
<feature type="compositionally biased region" description="Pro residues" evidence="3">
    <location>
        <begin position="82"/>
        <end position="92"/>
    </location>
</feature>
<feature type="compositionally biased region" description="Low complexity" evidence="3">
    <location>
        <begin position="93"/>
        <end position="107"/>
    </location>
</feature>
<feature type="compositionally biased region" description="Basic and acidic residues" evidence="3">
    <location>
        <begin position="123"/>
        <end position="135"/>
    </location>
</feature>
<feature type="compositionally biased region" description="Low complexity" evidence="3">
    <location>
        <begin position="136"/>
        <end position="153"/>
    </location>
</feature>
<feature type="compositionally biased region" description="Low complexity" evidence="3">
    <location>
        <begin position="211"/>
        <end position="222"/>
    </location>
</feature>
<feature type="compositionally biased region" description="Pro residues" evidence="3">
    <location>
        <begin position="223"/>
        <end position="236"/>
    </location>
</feature>
<feature type="compositionally biased region" description="Low complexity" evidence="3">
    <location>
        <begin position="244"/>
        <end position="257"/>
    </location>
</feature>
<feature type="compositionally biased region" description="Gly residues" evidence="3">
    <location>
        <begin position="258"/>
        <end position="269"/>
    </location>
</feature>
<feature type="compositionally biased region" description="Low complexity" evidence="3">
    <location>
        <begin position="270"/>
        <end position="283"/>
    </location>
</feature>
<feature type="compositionally biased region" description="Gly residues" evidence="3">
    <location>
        <begin position="284"/>
        <end position="310"/>
    </location>
</feature>
<feature type="compositionally biased region" description="Basic residues" evidence="3">
    <location>
        <begin position="311"/>
        <end position="322"/>
    </location>
</feature>
<feature type="binding site" evidence="2">
    <location>
        <begin position="446"/>
        <end position="453"/>
    </location>
    <ligand>
        <name>GTP</name>
        <dbReference type="ChEBI" id="CHEBI:37565"/>
    </ligand>
</feature>
<feature type="binding site" evidence="2">
    <location>
        <begin position="496"/>
        <end position="500"/>
    </location>
    <ligand>
        <name>GTP</name>
        <dbReference type="ChEBI" id="CHEBI:37565"/>
    </ligand>
</feature>
<feature type="binding site" evidence="2">
    <location>
        <begin position="550"/>
        <end position="553"/>
    </location>
    <ligand>
        <name>GTP</name>
        <dbReference type="ChEBI" id="CHEBI:37565"/>
    </ligand>
</feature>
<keyword id="KW-0963">Cytoplasm</keyword>
<keyword id="KW-0342">GTP-binding</keyword>
<keyword id="KW-0396">Initiation factor</keyword>
<keyword id="KW-0547">Nucleotide-binding</keyword>
<keyword id="KW-0648">Protein biosynthesis</keyword>